<dbReference type="EC" id="3.5.4.2" evidence="1"/>
<dbReference type="EMBL" id="CP000036">
    <property type="protein sequence ID" value="ABB68180.1"/>
    <property type="molecule type" value="Genomic_DNA"/>
</dbReference>
<dbReference type="SMR" id="Q31US8"/>
<dbReference type="KEGG" id="sbo:SBO_3704"/>
<dbReference type="HOGENOM" id="CLU_027935_0_0_6"/>
<dbReference type="Proteomes" id="UP000007067">
    <property type="component" value="Chromosome"/>
</dbReference>
<dbReference type="GO" id="GO:0000034">
    <property type="term" value="F:adenine deaminase activity"/>
    <property type="evidence" value="ECO:0007669"/>
    <property type="project" value="UniProtKB-UniRule"/>
</dbReference>
<dbReference type="GO" id="GO:0006146">
    <property type="term" value="P:adenine catabolic process"/>
    <property type="evidence" value="ECO:0007669"/>
    <property type="project" value="InterPro"/>
</dbReference>
<dbReference type="CDD" id="cd01295">
    <property type="entry name" value="AdeC"/>
    <property type="match status" value="1"/>
</dbReference>
<dbReference type="FunFam" id="3.20.20.140:FF:000016">
    <property type="entry name" value="Adenine deaminase"/>
    <property type="match status" value="1"/>
</dbReference>
<dbReference type="Gene3D" id="3.20.20.140">
    <property type="entry name" value="Metal-dependent hydrolases"/>
    <property type="match status" value="1"/>
</dbReference>
<dbReference type="Gene3D" id="2.30.40.10">
    <property type="entry name" value="Urease, subunit C, domain 1"/>
    <property type="match status" value="1"/>
</dbReference>
<dbReference type="HAMAP" id="MF_01518">
    <property type="entry name" value="Adenine_deamin"/>
    <property type="match status" value="1"/>
</dbReference>
<dbReference type="InterPro" id="IPR006679">
    <property type="entry name" value="Adenine_deam"/>
</dbReference>
<dbReference type="InterPro" id="IPR026912">
    <property type="entry name" value="Adenine_deam_C"/>
</dbReference>
<dbReference type="InterPro" id="IPR006680">
    <property type="entry name" value="Amidohydro-rel"/>
</dbReference>
<dbReference type="InterPro" id="IPR011059">
    <property type="entry name" value="Metal-dep_hydrolase_composite"/>
</dbReference>
<dbReference type="InterPro" id="IPR032466">
    <property type="entry name" value="Metal_Hydrolase"/>
</dbReference>
<dbReference type="NCBIfam" id="TIGR01178">
    <property type="entry name" value="ade"/>
    <property type="match status" value="1"/>
</dbReference>
<dbReference type="NCBIfam" id="NF007457">
    <property type="entry name" value="PRK10027.1"/>
    <property type="match status" value="1"/>
</dbReference>
<dbReference type="PANTHER" id="PTHR11113:SF2">
    <property type="entry name" value="ADENINE DEAMINASE"/>
    <property type="match status" value="1"/>
</dbReference>
<dbReference type="PANTHER" id="PTHR11113">
    <property type="entry name" value="N-ACETYLGLUCOSAMINE-6-PHOSPHATE DEACETYLASE"/>
    <property type="match status" value="1"/>
</dbReference>
<dbReference type="Pfam" id="PF13382">
    <property type="entry name" value="Adenine_deam_C"/>
    <property type="match status" value="1"/>
</dbReference>
<dbReference type="Pfam" id="PF01979">
    <property type="entry name" value="Amidohydro_1"/>
    <property type="match status" value="1"/>
</dbReference>
<dbReference type="SUPFAM" id="SSF51338">
    <property type="entry name" value="Composite domain of metallo-dependent hydrolases"/>
    <property type="match status" value="1"/>
</dbReference>
<dbReference type="SUPFAM" id="SSF51556">
    <property type="entry name" value="Metallo-dependent hydrolases"/>
    <property type="match status" value="1"/>
</dbReference>
<reference key="1">
    <citation type="journal article" date="2005" name="Nucleic Acids Res.">
        <title>Genome dynamics and diversity of Shigella species, the etiologic agents of bacillary dysentery.</title>
        <authorList>
            <person name="Yang F."/>
            <person name="Yang J."/>
            <person name="Zhang X."/>
            <person name="Chen L."/>
            <person name="Jiang Y."/>
            <person name="Yan Y."/>
            <person name="Tang X."/>
            <person name="Wang J."/>
            <person name="Xiong Z."/>
            <person name="Dong J."/>
            <person name="Xue Y."/>
            <person name="Zhu Y."/>
            <person name="Xu X."/>
            <person name="Sun L."/>
            <person name="Chen S."/>
            <person name="Nie H."/>
            <person name="Peng J."/>
            <person name="Xu J."/>
            <person name="Wang Y."/>
            <person name="Yuan Z."/>
            <person name="Wen Y."/>
            <person name="Yao Z."/>
            <person name="Shen Y."/>
            <person name="Qiang B."/>
            <person name="Hou Y."/>
            <person name="Yu J."/>
            <person name="Jin Q."/>
        </authorList>
    </citation>
    <scope>NUCLEOTIDE SEQUENCE [LARGE SCALE GENOMIC DNA]</scope>
    <source>
        <strain>Sb227</strain>
    </source>
</reference>
<feature type="chain" id="PRO_0000296731" description="Adenine deaminase">
    <location>
        <begin position="1"/>
        <end position="588"/>
    </location>
</feature>
<proteinExistence type="inferred from homology"/>
<protein>
    <recommendedName>
        <fullName evidence="1">Adenine deaminase</fullName>
        <shortName evidence="1">Adenase</shortName>
        <shortName evidence="1">Adenine aminase</shortName>
        <ecNumber evidence="1">3.5.4.2</ecNumber>
    </recommendedName>
</protein>
<name>ADEC_SHIBS</name>
<keyword id="KW-0378">Hydrolase</keyword>
<keyword id="KW-0464">Manganese</keyword>
<organism>
    <name type="scientific">Shigella boydii serotype 4 (strain Sb227)</name>
    <dbReference type="NCBI Taxonomy" id="300268"/>
    <lineage>
        <taxon>Bacteria</taxon>
        <taxon>Pseudomonadati</taxon>
        <taxon>Pseudomonadota</taxon>
        <taxon>Gammaproteobacteria</taxon>
        <taxon>Enterobacterales</taxon>
        <taxon>Enterobacteriaceae</taxon>
        <taxon>Shigella</taxon>
    </lineage>
</organism>
<accession>Q31US8</accession>
<evidence type="ECO:0000255" key="1">
    <source>
        <dbReference type="HAMAP-Rule" id="MF_01518"/>
    </source>
</evidence>
<gene>
    <name evidence="1" type="primary">ade</name>
    <name type="ordered locus">SBO_3704</name>
</gene>
<comment type="catalytic activity">
    <reaction evidence="1">
        <text>adenine + H2O + H(+) = hypoxanthine + NH4(+)</text>
        <dbReference type="Rhea" id="RHEA:23688"/>
        <dbReference type="ChEBI" id="CHEBI:15377"/>
        <dbReference type="ChEBI" id="CHEBI:15378"/>
        <dbReference type="ChEBI" id="CHEBI:16708"/>
        <dbReference type="ChEBI" id="CHEBI:17368"/>
        <dbReference type="ChEBI" id="CHEBI:28938"/>
        <dbReference type="EC" id="3.5.4.2"/>
    </reaction>
</comment>
<comment type="cofactor">
    <cofactor evidence="1">
        <name>Mn(2+)</name>
        <dbReference type="ChEBI" id="CHEBI:29035"/>
    </cofactor>
</comment>
<comment type="subunit">
    <text evidence="1">Homodimer.</text>
</comment>
<comment type="similarity">
    <text evidence="1">Belongs to the metallo-dependent hydrolases superfamily. Adenine deaminase family.</text>
</comment>
<sequence length="588" mass="63861">MNNSINHKFHHISRAEYQELLAVSRGDAVADYIIDNVSILDLINGGEISGPIVIKGRYIAGVGAEYADAPALQRIDARGATAVPGFIDAHLHIESSMMTPVTFETATLPRGLTTVICDPHEIVNVMGEAGFAWFARCAEQARQNQYLQVSSCVPALEGCDVNGASFTLEQMLAWRDHPQVTGLAEMMDYPGVISGQNALLDKLDAFRHLTLDGHCPGLGGKELNAYITAGIENCHESYQLEEGRRKLQLGMSLMIREGSAARNLNALAPLINEFNSPQCMLCTDDRNPWEIAHEGHIDALIRRLIEQHNVPLHVAYRVASWSTARHFGLNHLDLLAPGKQADIVLLSDARKVTVQQVLVKGEPIDAQTLQAEESARLAQSAPPYGNTIARQPVSASDFALQFTPGKRYRVIDVIHNELITHSHSSVYSENGFDRDDVCFIAVLERYGQRLAPACGLLGGFGLNEGALAATVSHDSHNIVVIGRSAEEMALAVYQVIQDGGGLCVVRNGQVQSHLPLPIAGLMSTDTAQSLAEQIDALKAAARECGPLPDEPFIQMAFLSLPVIPALKLTSQGLFDGEKFVFTTLEVTE</sequence>